<organism>
    <name type="scientific">Mycolicibacterium smegmatis (strain ATCC 700084 / mc(2)155)</name>
    <name type="common">Mycobacterium smegmatis</name>
    <dbReference type="NCBI Taxonomy" id="246196"/>
    <lineage>
        <taxon>Bacteria</taxon>
        <taxon>Bacillati</taxon>
        <taxon>Actinomycetota</taxon>
        <taxon>Actinomycetes</taxon>
        <taxon>Mycobacteriales</taxon>
        <taxon>Mycobacteriaceae</taxon>
        <taxon>Mycolicibacterium</taxon>
    </lineage>
</organism>
<name>GLMU_MYCS2</name>
<proteinExistence type="inferred from homology"/>
<keyword id="KW-0012">Acyltransferase</keyword>
<keyword id="KW-0133">Cell shape</keyword>
<keyword id="KW-0961">Cell wall biogenesis/degradation</keyword>
<keyword id="KW-0963">Cytoplasm</keyword>
<keyword id="KW-0460">Magnesium</keyword>
<keyword id="KW-0479">Metal-binding</keyword>
<keyword id="KW-0511">Multifunctional enzyme</keyword>
<keyword id="KW-0548">Nucleotidyltransferase</keyword>
<keyword id="KW-0573">Peptidoglycan synthesis</keyword>
<keyword id="KW-1185">Reference proteome</keyword>
<keyword id="KW-0677">Repeat</keyword>
<keyword id="KW-0808">Transferase</keyword>
<accession>A0R3C7</accession>
<accession>I7GFB0</accession>
<protein>
    <recommendedName>
        <fullName evidence="1">Bifunctional protein GlmU</fullName>
    </recommendedName>
    <domain>
        <recommendedName>
            <fullName evidence="1">UDP-N-acetylglucosamine pyrophosphorylase</fullName>
            <ecNumber evidence="1">2.7.7.23</ecNumber>
        </recommendedName>
        <alternativeName>
            <fullName evidence="1">N-acetylglucosamine-1-phosphate uridyltransferase</fullName>
        </alternativeName>
    </domain>
    <domain>
        <recommendedName>
            <fullName evidence="1">Glucosamine-1-phosphate N-acetyltransferase</fullName>
            <ecNumber evidence="1">2.3.1.157</ecNumber>
        </recommendedName>
    </domain>
</protein>
<gene>
    <name evidence="1" type="primary">glmU</name>
    <name type="ordered locus">MSMEG_5426</name>
    <name type="ordered locus">MSMEI_5277</name>
</gene>
<comment type="function">
    <text evidence="1">Catalyzes the last two sequential reactions in the de novo biosynthetic pathway for UDP-N-acetylglucosamine (UDP-GlcNAc). The C-terminal domain catalyzes the transfer of acetyl group from acetyl coenzyme A to glucosamine-1-phosphate (GlcN-1-P) to produce N-acetylglucosamine-1-phosphate (GlcNAc-1-P), which is converted into UDP-GlcNAc by the transfer of uridine 5-monophosphate (from uridine 5-triphosphate), a reaction catalyzed by the N-terminal domain.</text>
</comment>
<comment type="catalytic activity">
    <reaction evidence="1">
        <text>alpha-D-glucosamine 1-phosphate + acetyl-CoA = N-acetyl-alpha-D-glucosamine 1-phosphate + CoA + H(+)</text>
        <dbReference type="Rhea" id="RHEA:13725"/>
        <dbReference type="ChEBI" id="CHEBI:15378"/>
        <dbReference type="ChEBI" id="CHEBI:57287"/>
        <dbReference type="ChEBI" id="CHEBI:57288"/>
        <dbReference type="ChEBI" id="CHEBI:57776"/>
        <dbReference type="ChEBI" id="CHEBI:58516"/>
        <dbReference type="EC" id="2.3.1.157"/>
    </reaction>
</comment>
<comment type="catalytic activity">
    <reaction evidence="1">
        <text>N-acetyl-alpha-D-glucosamine 1-phosphate + UTP + H(+) = UDP-N-acetyl-alpha-D-glucosamine + diphosphate</text>
        <dbReference type="Rhea" id="RHEA:13509"/>
        <dbReference type="ChEBI" id="CHEBI:15378"/>
        <dbReference type="ChEBI" id="CHEBI:33019"/>
        <dbReference type="ChEBI" id="CHEBI:46398"/>
        <dbReference type="ChEBI" id="CHEBI:57705"/>
        <dbReference type="ChEBI" id="CHEBI:57776"/>
        <dbReference type="EC" id="2.7.7.23"/>
    </reaction>
</comment>
<comment type="cofactor">
    <cofactor evidence="1">
        <name>Mg(2+)</name>
        <dbReference type="ChEBI" id="CHEBI:18420"/>
    </cofactor>
    <text evidence="1">Binds 1 Mg(2+) ion per subunit.</text>
</comment>
<comment type="pathway">
    <text evidence="1">Nucleotide-sugar biosynthesis; UDP-N-acetyl-alpha-D-glucosamine biosynthesis; N-acetyl-alpha-D-glucosamine 1-phosphate from alpha-D-glucosamine 6-phosphate (route II): step 2/2.</text>
</comment>
<comment type="pathway">
    <text evidence="1">Nucleotide-sugar biosynthesis; UDP-N-acetyl-alpha-D-glucosamine biosynthesis; UDP-N-acetyl-alpha-D-glucosamine from N-acetyl-alpha-D-glucosamine 1-phosphate: step 1/1.</text>
</comment>
<comment type="pathway">
    <text evidence="1">Bacterial outer membrane biogenesis; LPS lipid A biosynthesis.</text>
</comment>
<comment type="subunit">
    <text evidence="1">Homotrimer.</text>
</comment>
<comment type="subcellular location">
    <subcellularLocation>
        <location evidence="1">Cytoplasm</location>
    </subcellularLocation>
</comment>
<comment type="similarity">
    <text evidence="1">In the N-terminal section; belongs to the N-acetylglucosamine-1-phosphate uridyltransferase family.</text>
</comment>
<comment type="similarity">
    <text evidence="1">In the C-terminal section; belongs to the transferase hexapeptide repeat family.</text>
</comment>
<feature type="chain" id="PRO_0000337732" description="Bifunctional protein GlmU">
    <location>
        <begin position="1"/>
        <end position="482"/>
    </location>
</feature>
<feature type="region of interest" description="Pyrophosphorylase" evidence="1">
    <location>
        <begin position="1"/>
        <end position="241"/>
    </location>
</feature>
<feature type="region of interest" description="Linker" evidence="1">
    <location>
        <begin position="242"/>
        <end position="262"/>
    </location>
</feature>
<feature type="region of interest" description="N-acetyltransferase" evidence="1">
    <location>
        <begin position="263"/>
        <end position="482"/>
    </location>
</feature>
<feature type="region of interest" description="Disordered" evidence="2">
    <location>
        <begin position="463"/>
        <end position="482"/>
    </location>
</feature>
<feature type="compositionally biased region" description="Basic and acidic residues" evidence="2">
    <location>
        <begin position="472"/>
        <end position="482"/>
    </location>
</feature>
<feature type="active site" description="Proton acceptor" evidence="1">
    <location>
        <position position="374"/>
    </location>
</feature>
<feature type="binding site" evidence="1">
    <location>
        <begin position="12"/>
        <end position="15"/>
    </location>
    <ligand>
        <name>UDP-N-acetyl-alpha-D-glucosamine</name>
        <dbReference type="ChEBI" id="CHEBI:57705"/>
    </ligand>
</feature>
<feature type="binding site" evidence="1">
    <location>
        <position position="26"/>
    </location>
    <ligand>
        <name>UDP-N-acetyl-alpha-D-glucosamine</name>
        <dbReference type="ChEBI" id="CHEBI:57705"/>
    </ligand>
</feature>
<feature type="binding site" evidence="1">
    <location>
        <position position="83"/>
    </location>
    <ligand>
        <name>UDP-N-acetyl-alpha-D-glucosamine</name>
        <dbReference type="ChEBI" id="CHEBI:57705"/>
    </ligand>
</feature>
<feature type="binding site" evidence="1">
    <location>
        <begin position="88"/>
        <end position="89"/>
    </location>
    <ligand>
        <name>UDP-N-acetyl-alpha-D-glucosamine</name>
        <dbReference type="ChEBI" id="CHEBI:57705"/>
    </ligand>
</feature>
<feature type="binding site" evidence="1">
    <location>
        <begin position="112"/>
        <end position="114"/>
    </location>
    <ligand>
        <name>UDP-N-acetyl-alpha-D-glucosamine</name>
        <dbReference type="ChEBI" id="CHEBI:57705"/>
    </ligand>
</feature>
<feature type="binding site" evidence="1">
    <location>
        <position position="114"/>
    </location>
    <ligand>
        <name>Mg(2+)</name>
        <dbReference type="ChEBI" id="CHEBI:18420"/>
    </ligand>
</feature>
<feature type="binding site" evidence="1">
    <location>
        <position position="151"/>
    </location>
    <ligand>
        <name>UDP-N-acetyl-alpha-D-glucosamine</name>
        <dbReference type="ChEBI" id="CHEBI:57705"/>
    </ligand>
</feature>
<feature type="binding site" evidence="1">
    <location>
        <position position="166"/>
    </location>
    <ligand>
        <name>UDP-N-acetyl-alpha-D-glucosamine</name>
        <dbReference type="ChEBI" id="CHEBI:57705"/>
    </ligand>
</feature>
<feature type="binding site" evidence="1">
    <location>
        <position position="181"/>
    </location>
    <ligand>
        <name>UDP-N-acetyl-alpha-D-glucosamine</name>
        <dbReference type="ChEBI" id="CHEBI:57705"/>
    </ligand>
</feature>
<feature type="binding site" evidence="1">
    <location>
        <position position="239"/>
    </location>
    <ligand>
        <name>Mg(2+)</name>
        <dbReference type="ChEBI" id="CHEBI:18420"/>
    </ligand>
</feature>
<feature type="binding site" evidence="1">
    <location>
        <position position="239"/>
    </location>
    <ligand>
        <name>UDP-N-acetyl-alpha-D-glucosamine</name>
        <dbReference type="ChEBI" id="CHEBI:57705"/>
    </ligand>
</feature>
<feature type="binding site" evidence="1">
    <location>
        <position position="344"/>
    </location>
    <ligand>
        <name>UDP-N-acetyl-alpha-D-glucosamine</name>
        <dbReference type="ChEBI" id="CHEBI:57705"/>
    </ligand>
</feature>
<feature type="binding site" evidence="1">
    <location>
        <position position="362"/>
    </location>
    <ligand>
        <name>UDP-N-acetyl-alpha-D-glucosamine</name>
        <dbReference type="ChEBI" id="CHEBI:57705"/>
    </ligand>
</feature>
<feature type="binding site" evidence="1">
    <location>
        <position position="377"/>
    </location>
    <ligand>
        <name>UDP-N-acetyl-alpha-D-glucosamine</name>
        <dbReference type="ChEBI" id="CHEBI:57705"/>
    </ligand>
</feature>
<feature type="binding site" evidence="1">
    <location>
        <position position="388"/>
    </location>
    <ligand>
        <name>UDP-N-acetyl-alpha-D-glucosamine</name>
        <dbReference type="ChEBI" id="CHEBI:57705"/>
    </ligand>
</feature>
<feature type="binding site" evidence="1">
    <location>
        <position position="391"/>
    </location>
    <ligand>
        <name>acetyl-CoA</name>
        <dbReference type="ChEBI" id="CHEBI:57288"/>
    </ligand>
</feature>
<feature type="binding site" evidence="1">
    <location>
        <begin position="397"/>
        <end position="398"/>
    </location>
    <ligand>
        <name>acetyl-CoA</name>
        <dbReference type="ChEBI" id="CHEBI:57288"/>
    </ligand>
</feature>
<feature type="binding site" evidence="1">
    <location>
        <position position="416"/>
    </location>
    <ligand>
        <name>acetyl-CoA</name>
        <dbReference type="ChEBI" id="CHEBI:57288"/>
    </ligand>
</feature>
<feature type="binding site" evidence="1">
    <location>
        <position position="434"/>
    </location>
    <ligand>
        <name>acetyl-CoA</name>
        <dbReference type="ChEBI" id="CHEBI:57288"/>
    </ligand>
</feature>
<dbReference type="EC" id="2.7.7.23" evidence="1"/>
<dbReference type="EC" id="2.3.1.157" evidence="1"/>
<dbReference type="EMBL" id="CP000480">
    <property type="protein sequence ID" value="ABK75163.1"/>
    <property type="molecule type" value="Genomic_DNA"/>
</dbReference>
<dbReference type="EMBL" id="CP001663">
    <property type="protein sequence ID" value="AFP41719.1"/>
    <property type="molecule type" value="Genomic_DNA"/>
</dbReference>
<dbReference type="RefSeq" id="WP_011730527.1">
    <property type="nucleotide sequence ID" value="NZ_SIJM01000006.1"/>
</dbReference>
<dbReference type="RefSeq" id="YP_889665.1">
    <property type="nucleotide sequence ID" value="NC_008596.1"/>
</dbReference>
<dbReference type="SMR" id="A0R3C7"/>
<dbReference type="STRING" id="246196.MSMEG_5426"/>
<dbReference type="PaxDb" id="246196-MSMEI_5277"/>
<dbReference type="KEGG" id="msb:LJ00_26815"/>
<dbReference type="KEGG" id="msg:MSMEI_5277"/>
<dbReference type="KEGG" id="msm:MSMEG_5426"/>
<dbReference type="PATRIC" id="fig|246196.19.peg.5287"/>
<dbReference type="eggNOG" id="COG1207">
    <property type="taxonomic scope" value="Bacteria"/>
</dbReference>
<dbReference type="OrthoDB" id="9775031at2"/>
<dbReference type="UniPathway" id="UPA00113">
    <property type="reaction ID" value="UER00532"/>
</dbReference>
<dbReference type="UniPathway" id="UPA00113">
    <property type="reaction ID" value="UER00533"/>
</dbReference>
<dbReference type="UniPathway" id="UPA00973"/>
<dbReference type="Proteomes" id="UP000000757">
    <property type="component" value="Chromosome"/>
</dbReference>
<dbReference type="Proteomes" id="UP000006158">
    <property type="component" value="Chromosome"/>
</dbReference>
<dbReference type="GO" id="GO:0005737">
    <property type="term" value="C:cytoplasm"/>
    <property type="evidence" value="ECO:0007669"/>
    <property type="project" value="UniProtKB-SubCell"/>
</dbReference>
<dbReference type="GO" id="GO:0016020">
    <property type="term" value="C:membrane"/>
    <property type="evidence" value="ECO:0007669"/>
    <property type="project" value="GOC"/>
</dbReference>
<dbReference type="GO" id="GO:0019134">
    <property type="term" value="F:glucosamine-1-phosphate N-acetyltransferase activity"/>
    <property type="evidence" value="ECO:0007669"/>
    <property type="project" value="UniProtKB-UniRule"/>
</dbReference>
<dbReference type="GO" id="GO:0000287">
    <property type="term" value="F:magnesium ion binding"/>
    <property type="evidence" value="ECO:0007669"/>
    <property type="project" value="UniProtKB-UniRule"/>
</dbReference>
<dbReference type="GO" id="GO:0003977">
    <property type="term" value="F:UDP-N-acetylglucosamine diphosphorylase activity"/>
    <property type="evidence" value="ECO:0007669"/>
    <property type="project" value="UniProtKB-UniRule"/>
</dbReference>
<dbReference type="GO" id="GO:0000902">
    <property type="term" value="P:cell morphogenesis"/>
    <property type="evidence" value="ECO:0007669"/>
    <property type="project" value="UniProtKB-UniRule"/>
</dbReference>
<dbReference type="GO" id="GO:0071555">
    <property type="term" value="P:cell wall organization"/>
    <property type="evidence" value="ECO:0007669"/>
    <property type="project" value="UniProtKB-KW"/>
</dbReference>
<dbReference type="GO" id="GO:0009245">
    <property type="term" value="P:lipid A biosynthetic process"/>
    <property type="evidence" value="ECO:0007669"/>
    <property type="project" value="UniProtKB-UniRule"/>
</dbReference>
<dbReference type="GO" id="GO:0009252">
    <property type="term" value="P:peptidoglycan biosynthetic process"/>
    <property type="evidence" value="ECO:0007669"/>
    <property type="project" value="UniProtKB-UniRule"/>
</dbReference>
<dbReference type="GO" id="GO:0008360">
    <property type="term" value="P:regulation of cell shape"/>
    <property type="evidence" value="ECO:0007669"/>
    <property type="project" value="UniProtKB-KW"/>
</dbReference>
<dbReference type="GO" id="GO:0006048">
    <property type="term" value="P:UDP-N-acetylglucosamine biosynthetic process"/>
    <property type="evidence" value="ECO:0007669"/>
    <property type="project" value="UniProtKB-UniPathway"/>
</dbReference>
<dbReference type="CDD" id="cd02540">
    <property type="entry name" value="GT2_GlmU_N_bac"/>
    <property type="match status" value="1"/>
</dbReference>
<dbReference type="CDD" id="cd03353">
    <property type="entry name" value="LbH_GlmU_C"/>
    <property type="match status" value="1"/>
</dbReference>
<dbReference type="Gene3D" id="2.160.10.10">
    <property type="entry name" value="Hexapeptide repeat proteins"/>
    <property type="match status" value="1"/>
</dbReference>
<dbReference type="Gene3D" id="3.90.550.10">
    <property type="entry name" value="Spore Coat Polysaccharide Biosynthesis Protein SpsA, Chain A"/>
    <property type="match status" value="1"/>
</dbReference>
<dbReference type="HAMAP" id="MF_01631">
    <property type="entry name" value="GlmU"/>
    <property type="match status" value="1"/>
</dbReference>
<dbReference type="InterPro" id="IPR005882">
    <property type="entry name" value="Bifunctional_GlmU"/>
</dbReference>
<dbReference type="InterPro" id="IPR050065">
    <property type="entry name" value="GlmU-like"/>
</dbReference>
<dbReference type="InterPro" id="IPR038009">
    <property type="entry name" value="GlmU_C_LbH"/>
</dbReference>
<dbReference type="InterPro" id="IPR001451">
    <property type="entry name" value="Hexapep"/>
</dbReference>
<dbReference type="InterPro" id="IPR025877">
    <property type="entry name" value="MobA-like_NTP_Trfase"/>
</dbReference>
<dbReference type="InterPro" id="IPR029044">
    <property type="entry name" value="Nucleotide-diphossugar_trans"/>
</dbReference>
<dbReference type="InterPro" id="IPR011004">
    <property type="entry name" value="Trimer_LpxA-like_sf"/>
</dbReference>
<dbReference type="NCBIfam" id="TIGR01173">
    <property type="entry name" value="glmU"/>
    <property type="match status" value="1"/>
</dbReference>
<dbReference type="NCBIfam" id="NF010932">
    <property type="entry name" value="PRK14352.1"/>
    <property type="match status" value="1"/>
</dbReference>
<dbReference type="PANTHER" id="PTHR43584:SF3">
    <property type="entry name" value="BIFUNCTIONAL PROTEIN GLMU"/>
    <property type="match status" value="1"/>
</dbReference>
<dbReference type="PANTHER" id="PTHR43584">
    <property type="entry name" value="NUCLEOTIDYL TRANSFERASE"/>
    <property type="match status" value="1"/>
</dbReference>
<dbReference type="Pfam" id="PF00132">
    <property type="entry name" value="Hexapep"/>
    <property type="match status" value="1"/>
</dbReference>
<dbReference type="Pfam" id="PF12804">
    <property type="entry name" value="NTP_transf_3"/>
    <property type="match status" value="1"/>
</dbReference>
<dbReference type="SUPFAM" id="SSF53448">
    <property type="entry name" value="Nucleotide-diphospho-sugar transferases"/>
    <property type="match status" value="1"/>
</dbReference>
<dbReference type="SUPFAM" id="SSF51161">
    <property type="entry name" value="Trimeric LpxA-like enzymes"/>
    <property type="match status" value="1"/>
</dbReference>
<evidence type="ECO:0000255" key="1">
    <source>
        <dbReference type="HAMAP-Rule" id="MF_01631"/>
    </source>
</evidence>
<evidence type="ECO:0000256" key="2">
    <source>
        <dbReference type="SAM" id="MobiDB-lite"/>
    </source>
</evidence>
<reference key="1">
    <citation type="submission" date="2006-10" db="EMBL/GenBank/DDBJ databases">
        <authorList>
            <person name="Fleischmann R.D."/>
            <person name="Dodson R.J."/>
            <person name="Haft D.H."/>
            <person name="Merkel J.S."/>
            <person name="Nelson W.C."/>
            <person name="Fraser C.M."/>
        </authorList>
    </citation>
    <scope>NUCLEOTIDE SEQUENCE [LARGE SCALE GENOMIC DNA]</scope>
    <source>
        <strain>ATCC 700084 / mc(2)155</strain>
    </source>
</reference>
<reference key="2">
    <citation type="journal article" date="2007" name="Genome Biol.">
        <title>Interrupted coding sequences in Mycobacterium smegmatis: authentic mutations or sequencing errors?</title>
        <authorList>
            <person name="Deshayes C."/>
            <person name="Perrodou E."/>
            <person name="Gallien S."/>
            <person name="Euphrasie D."/>
            <person name="Schaeffer C."/>
            <person name="Van-Dorsselaer A."/>
            <person name="Poch O."/>
            <person name="Lecompte O."/>
            <person name="Reyrat J.-M."/>
        </authorList>
    </citation>
    <scope>NUCLEOTIDE SEQUENCE [LARGE SCALE GENOMIC DNA]</scope>
    <source>
        <strain>ATCC 700084 / mc(2)155</strain>
    </source>
</reference>
<reference key="3">
    <citation type="journal article" date="2009" name="Genome Res.">
        <title>Ortho-proteogenomics: multiple proteomes investigation through orthology and a new MS-based protocol.</title>
        <authorList>
            <person name="Gallien S."/>
            <person name="Perrodou E."/>
            <person name="Carapito C."/>
            <person name="Deshayes C."/>
            <person name="Reyrat J.-M."/>
            <person name="Van Dorsselaer A."/>
            <person name="Poch O."/>
            <person name="Schaeffer C."/>
            <person name="Lecompte O."/>
        </authorList>
    </citation>
    <scope>NUCLEOTIDE SEQUENCE [LARGE SCALE GENOMIC DNA]</scope>
    <source>
        <strain>ATCC 700084 / mc(2)155</strain>
    </source>
</reference>
<sequence>MTASTEAAVVVLAAGAGTRMRSDTPKVLHTLAGRGMLAHVLHTVSEIDARHLVAVLGHDRERIAPEVARLSEELGRAIDVAVQDQQLGTGHAVNCGLTALPHDFAGMVVVTSGDVPLLDTATLTGLITSHGSGDAAATVLTTTLPDPTGYGRILRTQDHEIIGIVEQADATESQRTICEVNTGVYAFDIADLRSALTRLRSDNAQHELYLTDVVEILRQDHRTVRALHVDDSALVTGVNDRVQLSDLGKVLNRRIVAAHQRAGVTIIDPGSTWIDIDVQIGQDTVVHPGTQLLGATRVGSHCVIGPDTTLTHVTVGDGASVVRTHGSESVIGAGATVGPFTYLRPGTNLGADGKLGAFVETKNCTIGTGTKVPHLTYVGDADIGEYSNIGASSVFVNYDGENKSRTTIGSHVRTGSDTMFVAPVTVGDGAYTGAGTVLRDDVPPGALAVSAGPQRNIEGWVAKKRPGSAADKAARKALGDES</sequence>